<reference key="1">
    <citation type="submission" date="2007-07" db="EMBL/GenBank/DDBJ databases">
        <title>Complete genome sequence of Campylobacter hominis ATCC BAA-381, a commensal isolated from the human gastrointestinal tract.</title>
        <authorList>
            <person name="Fouts D.E."/>
            <person name="Mongodin E.F."/>
            <person name="Puiu D."/>
            <person name="Sebastian Y."/>
            <person name="Miller W.G."/>
            <person name="Mandrell R.E."/>
            <person name="Nelson K.E."/>
        </authorList>
    </citation>
    <scope>NUCLEOTIDE SEQUENCE [LARGE SCALE GENOMIC DNA]</scope>
    <source>
        <strain>ATCC BAA-381 / DSM 21671 / CCUG 45161 / LMG 19568 / NCTC 13146 / CH001A</strain>
    </source>
</reference>
<accession>A7I0P7</accession>
<evidence type="ECO:0000255" key="1">
    <source>
        <dbReference type="HAMAP-Rule" id="MF_00094"/>
    </source>
</evidence>
<proteinExistence type="inferred from homology"/>
<protein>
    <recommendedName>
        <fullName evidence="1">Peptide chain release factor 2</fullName>
        <shortName evidence="1">RF-2</shortName>
    </recommendedName>
</protein>
<name>RF2_CAMHC</name>
<gene>
    <name evidence="1" type="primary">prfB</name>
    <name type="ordered locus">CHAB381_0500</name>
</gene>
<organism>
    <name type="scientific">Campylobacter hominis (strain ATCC BAA-381 / DSM 21671 / CCUG 45161 / LMG 19568 / NCTC 13146 / CH001A)</name>
    <dbReference type="NCBI Taxonomy" id="360107"/>
    <lineage>
        <taxon>Bacteria</taxon>
        <taxon>Pseudomonadati</taxon>
        <taxon>Campylobacterota</taxon>
        <taxon>Epsilonproteobacteria</taxon>
        <taxon>Campylobacterales</taxon>
        <taxon>Campylobacteraceae</taxon>
        <taxon>Campylobacter</taxon>
    </lineage>
</organism>
<sequence length="364" mass="41417">MDNYEYSELLKELKNKISNVEAIIKPKILMTRLAEIEKTEQDPALWVDAKKAAQIGREKTKISNILAKFKKAQNELNDAKEFYELAVSENDGETINELFRESAKLSENIANLELSMMLSGENDDKNAIINIHPGAGGTEGEDWAGMLYRMYVRFCERVGYKIEILDFQEGDEAGIKDVNFIVKGENAYGYLKVESGIHRLVRISPFDSAGRRHTSFASVVVSPELDDDIQINIDEKDLRIDYYRSSGAGGQHVNKTESAVRITHIPTNIVVQCQNDRDQHKNKASAMKVLKSRLYELEKLKKQEESNKTPKSDIAWGYQIRNYVLFPYQQVKDLRSNIAYSQAEAILDGDIKKILEDVLINNQS</sequence>
<comment type="function">
    <text evidence="1">Peptide chain release factor 2 directs the termination of translation in response to the peptide chain termination codons UGA and UAA.</text>
</comment>
<comment type="subcellular location">
    <subcellularLocation>
        <location evidence="1">Cytoplasm</location>
    </subcellularLocation>
</comment>
<comment type="PTM">
    <text evidence="1">Methylated by PrmC. Methylation increases the termination efficiency of RF2.</text>
</comment>
<comment type="similarity">
    <text evidence="1">Belongs to the prokaryotic/mitochondrial release factor family.</text>
</comment>
<feature type="chain" id="PRO_1000093535" description="Peptide chain release factor 2">
    <location>
        <begin position="1"/>
        <end position="364"/>
    </location>
</feature>
<feature type="modified residue" description="N5-methylglutamine" evidence="1">
    <location>
        <position position="251"/>
    </location>
</feature>
<dbReference type="EMBL" id="CP000776">
    <property type="protein sequence ID" value="ABS51053.1"/>
    <property type="molecule type" value="Genomic_DNA"/>
</dbReference>
<dbReference type="RefSeq" id="WP_012108373.1">
    <property type="nucleotide sequence ID" value="NC_009714.1"/>
</dbReference>
<dbReference type="SMR" id="A7I0P7"/>
<dbReference type="STRING" id="360107.CHAB381_0500"/>
<dbReference type="KEGG" id="cha:CHAB381_0500"/>
<dbReference type="eggNOG" id="COG1186">
    <property type="taxonomic scope" value="Bacteria"/>
</dbReference>
<dbReference type="HOGENOM" id="CLU_036856_6_0_7"/>
<dbReference type="OrthoDB" id="9806673at2"/>
<dbReference type="Proteomes" id="UP000002407">
    <property type="component" value="Chromosome"/>
</dbReference>
<dbReference type="GO" id="GO:0005737">
    <property type="term" value="C:cytoplasm"/>
    <property type="evidence" value="ECO:0007669"/>
    <property type="project" value="UniProtKB-SubCell"/>
</dbReference>
<dbReference type="GO" id="GO:0016149">
    <property type="term" value="F:translation release factor activity, codon specific"/>
    <property type="evidence" value="ECO:0007669"/>
    <property type="project" value="UniProtKB-UniRule"/>
</dbReference>
<dbReference type="FunFam" id="3.30.160.20:FF:000010">
    <property type="entry name" value="Peptide chain release factor 2"/>
    <property type="match status" value="1"/>
</dbReference>
<dbReference type="Gene3D" id="3.30.160.20">
    <property type="match status" value="1"/>
</dbReference>
<dbReference type="Gene3D" id="3.30.70.1660">
    <property type="match status" value="1"/>
</dbReference>
<dbReference type="Gene3D" id="1.20.58.410">
    <property type="entry name" value="Release factor"/>
    <property type="match status" value="1"/>
</dbReference>
<dbReference type="HAMAP" id="MF_00094">
    <property type="entry name" value="Rel_fac_2"/>
    <property type="match status" value="1"/>
</dbReference>
<dbReference type="InterPro" id="IPR005139">
    <property type="entry name" value="PCRF"/>
</dbReference>
<dbReference type="InterPro" id="IPR000352">
    <property type="entry name" value="Pep_chain_release_fac_I"/>
</dbReference>
<dbReference type="InterPro" id="IPR045853">
    <property type="entry name" value="Pep_chain_release_fac_I_sf"/>
</dbReference>
<dbReference type="InterPro" id="IPR004374">
    <property type="entry name" value="PrfB"/>
</dbReference>
<dbReference type="NCBIfam" id="TIGR00020">
    <property type="entry name" value="prfB"/>
    <property type="match status" value="1"/>
</dbReference>
<dbReference type="PANTHER" id="PTHR43116:SF3">
    <property type="entry name" value="CLASS I PEPTIDE CHAIN RELEASE FACTOR"/>
    <property type="match status" value="1"/>
</dbReference>
<dbReference type="PANTHER" id="PTHR43116">
    <property type="entry name" value="PEPTIDE CHAIN RELEASE FACTOR 2"/>
    <property type="match status" value="1"/>
</dbReference>
<dbReference type="Pfam" id="PF03462">
    <property type="entry name" value="PCRF"/>
    <property type="match status" value="1"/>
</dbReference>
<dbReference type="Pfam" id="PF00472">
    <property type="entry name" value="RF-1"/>
    <property type="match status" value="1"/>
</dbReference>
<dbReference type="SMART" id="SM00937">
    <property type="entry name" value="PCRF"/>
    <property type="match status" value="1"/>
</dbReference>
<dbReference type="SUPFAM" id="SSF75620">
    <property type="entry name" value="Release factor"/>
    <property type="match status" value="1"/>
</dbReference>
<dbReference type="PROSITE" id="PS00745">
    <property type="entry name" value="RF_PROK_I"/>
    <property type="match status" value="1"/>
</dbReference>
<keyword id="KW-0963">Cytoplasm</keyword>
<keyword id="KW-0488">Methylation</keyword>
<keyword id="KW-0648">Protein biosynthesis</keyword>
<keyword id="KW-1185">Reference proteome</keyword>